<name>Y4RB_SINFN</name>
<protein>
    <recommendedName>
        <fullName>Putative integrase/recombinase y4rB</fullName>
    </recommendedName>
</protein>
<evidence type="ECO:0000255" key="1">
    <source>
        <dbReference type="PROSITE-ProRule" id="PRU01246"/>
    </source>
</evidence>
<evidence type="ECO:0000255" key="2">
    <source>
        <dbReference type="PROSITE-ProRule" id="PRU01248"/>
    </source>
</evidence>
<evidence type="ECO:0000305" key="3"/>
<accession>P55635</accession>
<gene>
    <name type="ordered locus">NGR_a01850</name>
    <name type="ORF">y4rB</name>
</gene>
<proteinExistence type="inferred from homology"/>
<sequence>MSTFRQAVQEYIEMRRGLGFKLRETERGLIDFAAFLEANDTPHITTELALAWAQRPSRAQPSHWATRLGYVRVFARYRAAADPRTQIPPSGLLPFRPKRARPYLYSKEDIQRLLSAALEMPCRYTRCKLRPWTYYCLFGLLSVSGLRLGEARNLKLADVDFDAAVLTIRGTKFGKSRLVPMHASTCAVLRDYLKRRRQHCAAQAASPYLFTSQLGNRLDVGDIHRTFYALSRQIGLRGATDSHGPRLHDMRHVFATNTLVRWYEAEQDPERLLPILSTYLGHVHVADTQWYLTGSPELMKEAMRRLERRWEDRT</sequence>
<keyword id="KW-0229">DNA integration</keyword>
<keyword id="KW-0233">DNA recombination</keyword>
<keyword id="KW-0238">DNA-binding</keyword>
<keyword id="KW-0614">Plasmid</keyword>
<keyword id="KW-1185">Reference proteome</keyword>
<keyword id="KW-0814">Transposable element</keyword>
<keyword id="KW-1179">Viral genome integration</keyword>
<keyword id="KW-1160">Virus entry into host cell</keyword>
<feature type="chain" id="PRO_0000197578" description="Putative integrase/recombinase y4rB">
    <location>
        <begin position="1"/>
        <end position="314"/>
    </location>
</feature>
<feature type="domain" description="Core-binding (CB)" evidence="2">
    <location>
        <begin position="2"/>
        <end position="79"/>
    </location>
</feature>
<feature type="domain" description="Tyr recombinase" evidence="1">
    <location>
        <begin position="100"/>
        <end position="304"/>
    </location>
</feature>
<feature type="active site" evidence="1">
    <location>
        <position position="147"/>
    </location>
</feature>
<feature type="active site" evidence="1">
    <location>
        <position position="172"/>
    </location>
</feature>
<feature type="active site" evidence="1">
    <location>
        <position position="248"/>
    </location>
</feature>
<feature type="active site" evidence="1">
    <location>
        <position position="251"/>
    </location>
</feature>
<feature type="active site" evidence="1">
    <location>
        <position position="282"/>
    </location>
</feature>
<feature type="active site" description="O-(3'-phospho-DNA)-tyrosine intermediate" evidence="1">
    <location>
        <position position="291"/>
    </location>
</feature>
<organism>
    <name type="scientific">Sinorhizobium fredii (strain NBRC 101917 / NGR234)</name>
    <dbReference type="NCBI Taxonomy" id="394"/>
    <lineage>
        <taxon>Bacteria</taxon>
        <taxon>Pseudomonadati</taxon>
        <taxon>Pseudomonadota</taxon>
        <taxon>Alphaproteobacteria</taxon>
        <taxon>Hyphomicrobiales</taxon>
        <taxon>Rhizobiaceae</taxon>
        <taxon>Sinorhizobium/Ensifer group</taxon>
        <taxon>Sinorhizobium</taxon>
    </lineage>
</organism>
<geneLocation type="plasmid">
    <name>sym pNGR234a</name>
</geneLocation>
<dbReference type="EMBL" id="U00090">
    <property type="protein sequence ID" value="AAB92468.1"/>
    <property type="molecule type" value="Genomic_DNA"/>
</dbReference>
<dbReference type="RefSeq" id="NP_444040.1">
    <property type="nucleotide sequence ID" value="NC_000914.2"/>
</dbReference>
<dbReference type="RefSeq" id="WP_010875219.1">
    <property type="nucleotide sequence ID" value="NC_000914.2"/>
</dbReference>
<dbReference type="SMR" id="P55635"/>
<dbReference type="KEGG" id="rhi:NGR_a01850"/>
<dbReference type="PATRIC" id="fig|394.7.peg.183"/>
<dbReference type="eggNOG" id="COG0582">
    <property type="taxonomic scope" value="Bacteria"/>
</dbReference>
<dbReference type="HOGENOM" id="CLU_027562_10_0_5"/>
<dbReference type="OrthoDB" id="5464621at2"/>
<dbReference type="Proteomes" id="UP000001054">
    <property type="component" value="Plasmid pNGR234a"/>
</dbReference>
<dbReference type="GO" id="GO:0003677">
    <property type="term" value="F:DNA binding"/>
    <property type="evidence" value="ECO:0007669"/>
    <property type="project" value="UniProtKB-KW"/>
</dbReference>
<dbReference type="GO" id="GO:0015074">
    <property type="term" value="P:DNA integration"/>
    <property type="evidence" value="ECO:0007669"/>
    <property type="project" value="UniProtKB-KW"/>
</dbReference>
<dbReference type="GO" id="GO:0006310">
    <property type="term" value="P:DNA recombination"/>
    <property type="evidence" value="ECO:0007669"/>
    <property type="project" value="UniProtKB-KW"/>
</dbReference>
<dbReference type="GO" id="GO:0075713">
    <property type="term" value="P:establishment of integrated proviral latency"/>
    <property type="evidence" value="ECO:0007669"/>
    <property type="project" value="UniProtKB-KW"/>
</dbReference>
<dbReference type="GO" id="GO:0046718">
    <property type="term" value="P:symbiont entry into host cell"/>
    <property type="evidence" value="ECO:0007669"/>
    <property type="project" value="UniProtKB-KW"/>
</dbReference>
<dbReference type="GO" id="GO:0044826">
    <property type="term" value="P:viral genome integration into host DNA"/>
    <property type="evidence" value="ECO:0007669"/>
    <property type="project" value="UniProtKB-KW"/>
</dbReference>
<dbReference type="CDD" id="cd00797">
    <property type="entry name" value="INT_RitB_C_like"/>
    <property type="match status" value="1"/>
</dbReference>
<dbReference type="Gene3D" id="1.10.443.10">
    <property type="entry name" value="Intergrase catalytic core"/>
    <property type="match status" value="1"/>
</dbReference>
<dbReference type="InterPro" id="IPR044068">
    <property type="entry name" value="CB"/>
</dbReference>
<dbReference type="InterPro" id="IPR011010">
    <property type="entry name" value="DNA_brk_join_enz"/>
</dbReference>
<dbReference type="InterPro" id="IPR013762">
    <property type="entry name" value="Integrase-like_cat_sf"/>
</dbReference>
<dbReference type="InterPro" id="IPR002104">
    <property type="entry name" value="Integrase_catalytic"/>
</dbReference>
<dbReference type="InterPro" id="IPR050090">
    <property type="entry name" value="Tyrosine_recombinase_XerCD"/>
</dbReference>
<dbReference type="PANTHER" id="PTHR30349:SF41">
    <property type="entry name" value="INTEGRASE_RECOMBINASE PROTEIN MJ0367-RELATED"/>
    <property type="match status" value="1"/>
</dbReference>
<dbReference type="PANTHER" id="PTHR30349">
    <property type="entry name" value="PHAGE INTEGRASE-RELATED"/>
    <property type="match status" value="1"/>
</dbReference>
<dbReference type="Pfam" id="PF00589">
    <property type="entry name" value="Phage_integrase"/>
    <property type="match status" value="1"/>
</dbReference>
<dbReference type="SUPFAM" id="SSF56349">
    <property type="entry name" value="DNA breaking-rejoining enzymes"/>
    <property type="match status" value="1"/>
</dbReference>
<dbReference type="PROSITE" id="PS51900">
    <property type="entry name" value="CB"/>
    <property type="match status" value="1"/>
</dbReference>
<dbReference type="PROSITE" id="PS51898">
    <property type="entry name" value="TYR_RECOMBINASE"/>
    <property type="match status" value="1"/>
</dbReference>
<comment type="similarity">
    <text evidence="3">Belongs to the 'phage' integrase family.</text>
</comment>
<reference key="1">
    <citation type="journal article" date="1997" name="Nature">
        <title>Molecular basis of symbiosis between Rhizobium and legumes.</title>
        <authorList>
            <person name="Freiberg C.A."/>
            <person name="Fellay R."/>
            <person name="Bairoch A."/>
            <person name="Broughton W.J."/>
            <person name="Rosenthal A."/>
            <person name="Perret X."/>
        </authorList>
    </citation>
    <scope>NUCLEOTIDE SEQUENCE [LARGE SCALE GENOMIC DNA]</scope>
    <source>
        <strain>NBRC 101917 / NGR234</strain>
    </source>
</reference>
<reference key="2">
    <citation type="journal article" date="2009" name="Appl. Environ. Microbiol.">
        <title>Rhizobium sp. strain NGR234 possesses a remarkable number of secretion systems.</title>
        <authorList>
            <person name="Schmeisser C."/>
            <person name="Liesegang H."/>
            <person name="Krysciak D."/>
            <person name="Bakkou N."/>
            <person name="Le Quere A."/>
            <person name="Wollherr A."/>
            <person name="Heinemeyer I."/>
            <person name="Morgenstern B."/>
            <person name="Pommerening-Roeser A."/>
            <person name="Flores M."/>
            <person name="Palacios R."/>
            <person name="Brenner S."/>
            <person name="Gottschalk G."/>
            <person name="Schmitz R.A."/>
            <person name="Broughton W.J."/>
            <person name="Perret X."/>
            <person name="Strittmatter A.W."/>
            <person name="Streit W.R."/>
        </authorList>
    </citation>
    <scope>NUCLEOTIDE SEQUENCE [LARGE SCALE GENOMIC DNA]</scope>
    <source>
        <strain>NBRC 101917 / NGR234</strain>
    </source>
</reference>